<accession>Q5LJ21</accession>
<reference key="1">
    <citation type="journal article" date="2005" name="Science">
        <title>Extensive DNA inversions in the B. fragilis genome control variable gene expression.</title>
        <authorList>
            <person name="Cerdeno-Tarraga A.-M."/>
            <person name="Patrick S."/>
            <person name="Crossman L.C."/>
            <person name="Blakely G."/>
            <person name="Abratt V."/>
            <person name="Lennard N."/>
            <person name="Poxton I."/>
            <person name="Duerden B."/>
            <person name="Harris B."/>
            <person name="Quail M.A."/>
            <person name="Barron A."/>
            <person name="Clark L."/>
            <person name="Corton C."/>
            <person name="Doggett J."/>
            <person name="Holden M.T.G."/>
            <person name="Larke N."/>
            <person name="Line A."/>
            <person name="Lord A."/>
            <person name="Norbertczak H."/>
            <person name="Ormond D."/>
            <person name="Price C."/>
            <person name="Rabbinowitsch E."/>
            <person name="Woodward J."/>
            <person name="Barrell B.G."/>
            <person name="Parkhill J."/>
        </authorList>
    </citation>
    <scope>NUCLEOTIDE SEQUENCE [LARGE SCALE GENOMIC DNA]</scope>
    <source>
        <strain>ATCC 25285 / DSM 2151 / CCUG 4856 / JCM 11019 / LMG 10263 / NCTC 9343 / Onslow / VPI 2553 / EN-2</strain>
    </source>
</reference>
<evidence type="ECO:0000255" key="1">
    <source>
        <dbReference type="HAMAP-Rule" id="MF_00386"/>
    </source>
</evidence>
<organism>
    <name type="scientific">Bacteroides fragilis (strain ATCC 25285 / DSM 2151 / CCUG 4856 / JCM 11019 / LMG 10263 / NCTC 9343 / Onslow / VPI 2553 / EN-2)</name>
    <dbReference type="NCBI Taxonomy" id="272559"/>
    <lineage>
        <taxon>Bacteria</taxon>
        <taxon>Pseudomonadati</taxon>
        <taxon>Bacteroidota</taxon>
        <taxon>Bacteroidia</taxon>
        <taxon>Bacteroidales</taxon>
        <taxon>Bacteroidaceae</taxon>
        <taxon>Bacteroides</taxon>
    </lineage>
</organism>
<dbReference type="EMBL" id="CR626927">
    <property type="protein sequence ID" value="CAH05855.1"/>
    <property type="molecule type" value="Genomic_DNA"/>
</dbReference>
<dbReference type="PaxDb" id="272559-BF9343_0076"/>
<dbReference type="KEGG" id="bfs:BF9343_0076"/>
<dbReference type="eggNOG" id="COG0759">
    <property type="taxonomic scope" value="Bacteria"/>
</dbReference>
<dbReference type="HOGENOM" id="CLU_144811_6_1_10"/>
<dbReference type="Proteomes" id="UP000006731">
    <property type="component" value="Chromosome"/>
</dbReference>
<dbReference type="GO" id="GO:0005886">
    <property type="term" value="C:plasma membrane"/>
    <property type="evidence" value="ECO:0007669"/>
    <property type="project" value="UniProtKB-SubCell"/>
</dbReference>
<dbReference type="HAMAP" id="MF_00386">
    <property type="entry name" value="UPF0161_YidD"/>
    <property type="match status" value="1"/>
</dbReference>
<dbReference type="InterPro" id="IPR002696">
    <property type="entry name" value="Membr_insert_effic_factor_YidD"/>
</dbReference>
<dbReference type="NCBIfam" id="TIGR00278">
    <property type="entry name" value="membrane protein insertion efficiency factor YidD"/>
    <property type="match status" value="1"/>
</dbReference>
<dbReference type="PANTHER" id="PTHR33383">
    <property type="entry name" value="MEMBRANE PROTEIN INSERTION EFFICIENCY FACTOR-RELATED"/>
    <property type="match status" value="1"/>
</dbReference>
<dbReference type="PANTHER" id="PTHR33383:SF1">
    <property type="entry name" value="MEMBRANE PROTEIN INSERTION EFFICIENCY FACTOR-RELATED"/>
    <property type="match status" value="1"/>
</dbReference>
<dbReference type="Pfam" id="PF01809">
    <property type="entry name" value="YidD"/>
    <property type="match status" value="1"/>
</dbReference>
<dbReference type="SMART" id="SM01234">
    <property type="entry name" value="Haemolytic"/>
    <property type="match status" value="1"/>
</dbReference>
<feature type="chain" id="PRO_0000253079" description="Putative membrane protein insertion efficiency factor">
    <location>
        <begin position="1"/>
        <end position="73"/>
    </location>
</feature>
<protein>
    <recommendedName>
        <fullName evidence="1">Putative membrane protein insertion efficiency factor</fullName>
    </recommendedName>
</protein>
<proteinExistence type="inferred from homology"/>
<sequence>MKRLLSYILLLPIYFYRACISPMTPPSCRFTPTCSQYAIEAIKKHGPFKGLYLAVRRILRCHPWGGSGYDPVP</sequence>
<comment type="function">
    <text evidence="1">Could be involved in insertion of integral membrane proteins into the membrane.</text>
</comment>
<comment type="subcellular location">
    <subcellularLocation>
        <location evidence="1">Cell inner membrane</location>
        <topology evidence="1">Peripheral membrane protein</topology>
        <orientation evidence="1">Cytoplasmic side</orientation>
    </subcellularLocation>
</comment>
<comment type="similarity">
    <text evidence="1">Belongs to the UPF0161 family.</text>
</comment>
<keyword id="KW-0997">Cell inner membrane</keyword>
<keyword id="KW-1003">Cell membrane</keyword>
<keyword id="KW-0472">Membrane</keyword>
<name>YIDD_BACFN</name>
<gene>
    <name type="ordered locus">BF0077</name>
</gene>